<protein>
    <recommendedName>
        <fullName>Flagellar biosynthesis protein FlhF</fullName>
    </recommendedName>
    <alternativeName>
        <fullName>Flagella-associated GTP-binding protein</fullName>
    </alternativeName>
</protein>
<dbReference type="EMBL" id="AE000511">
    <property type="protein sequence ID" value="AAD08078.1"/>
    <property type="molecule type" value="Genomic_DNA"/>
</dbReference>
<dbReference type="PIR" id="C64649">
    <property type="entry name" value="C64649"/>
</dbReference>
<dbReference type="RefSeq" id="NP_207825.1">
    <property type="nucleotide sequence ID" value="NC_000915.1"/>
</dbReference>
<dbReference type="SMR" id="O25679"/>
<dbReference type="DIP" id="DIP-3259N"/>
<dbReference type="IntAct" id="O25679">
    <property type="interactions" value="8"/>
</dbReference>
<dbReference type="MINT" id="O25679"/>
<dbReference type="STRING" id="85962.HP_1035"/>
<dbReference type="PaxDb" id="85962-C694_05355"/>
<dbReference type="EnsemblBacteria" id="AAD08078">
    <property type="protein sequence ID" value="AAD08078"/>
    <property type="gene ID" value="HP_1035"/>
</dbReference>
<dbReference type="KEGG" id="hpy:HP_1035"/>
<dbReference type="PATRIC" id="fig|85962.8.peg.1084"/>
<dbReference type="eggNOG" id="COG1419">
    <property type="taxonomic scope" value="Bacteria"/>
</dbReference>
<dbReference type="InParanoid" id="O25679"/>
<dbReference type="OrthoDB" id="9778554at2"/>
<dbReference type="PhylomeDB" id="O25679"/>
<dbReference type="Proteomes" id="UP000000429">
    <property type="component" value="Chromosome"/>
</dbReference>
<dbReference type="GO" id="GO:0005886">
    <property type="term" value="C:plasma membrane"/>
    <property type="evidence" value="ECO:0000318"/>
    <property type="project" value="GO_Central"/>
</dbReference>
<dbReference type="GO" id="GO:0016887">
    <property type="term" value="F:ATP hydrolysis activity"/>
    <property type="evidence" value="ECO:0007669"/>
    <property type="project" value="InterPro"/>
</dbReference>
<dbReference type="GO" id="GO:0005525">
    <property type="term" value="F:GTP binding"/>
    <property type="evidence" value="ECO:0007669"/>
    <property type="project" value="UniProtKB-KW"/>
</dbReference>
<dbReference type="GO" id="GO:0003924">
    <property type="term" value="F:GTPase activity"/>
    <property type="evidence" value="ECO:0000318"/>
    <property type="project" value="GO_Central"/>
</dbReference>
<dbReference type="GO" id="GO:0005047">
    <property type="term" value="F:signal recognition particle binding"/>
    <property type="evidence" value="ECO:0000318"/>
    <property type="project" value="GO_Central"/>
</dbReference>
<dbReference type="GO" id="GO:0044781">
    <property type="term" value="P:bacterial-type flagellum organization"/>
    <property type="evidence" value="ECO:0007669"/>
    <property type="project" value="UniProtKB-KW"/>
</dbReference>
<dbReference type="GO" id="GO:0006605">
    <property type="term" value="P:protein targeting"/>
    <property type="evidence" value="ECO:0000318"/>
    <property type="project" value="GO_Central"/>
</dbReference>
<dbReference type="GO" id="GO:0015031">
    <property type="term" value="P:protein transport"/>
    <property type="evidence" value="ECO:0007669"/>
    <property type="project" value="UniProtKB-KW"/>
</dbReference>
<dbReference type="GO" id="GO:0006614">
    <property type="term" value="P:SRP-dependent cotranslational protein targeting to membrane"/>
    <property type="evidence" value="ECO:0007669"/>
    <property type="project" value="InterPro"/>
</dbReference>
<dbReference type="CDD" id="cd17873">
    <property type="entry name" value="FlhF"/>
    <property type="match status" value="1"/>
</dbReference>
<dbReference type="FunFam" id="3.40.50.300:FF:000695">
    <property type="entry name" value="Flagellar biosynthesis regulator FlhF"/>
    <property type="match status" value="1"/>
</dbReference>
<dbReference type="Gene3D" id="1.20.120.1380">
    <property type="entry name" value="Flagellar FlhF biosynthesis protein, N domain"/>
    <property type="match status" value="1"/>
</dbReference>
<dbReference type="Gene3D" id="3.40.50.300">
    <property type="entry name" value="P-loop containing nucleotide triphosphate hydrolases"/>
    <property type="match status" value="1"/>
</dbReference>
<dbReference type="InterPro" id="IPR003593">
    <property type="entry name" value="AAA+_ATPase"/>
</dbReference>
<dbReference type="InterPro" id="IPR020006">
    <property type="entry name" value="FlhF"/>
</dbReference>
<dbReference type="InterPro" id="IPR047040">
    <property type="entry name" value="FlhF__GTPase_dom"/>
</dbReference>
<dbReference type="InterPro" id="IPR027417">
    <property type="entry name" value="P-loop_NTPase"/>
</dbReference>
<dbReference type="InterPro" id="IPR000897">
    <property type="entry name" value="SRP54_GTPase_dom"/>
</dbReference>
<dbReference type="NCBIfam" id="TIGR03499">
    <property type="entry name" value="FlhF"/>
    <property type="match status" value="1"/>
</dbReference>
<dbReference type="PANTHER" id="PTHR43134:SF3">
    <property type="entry name" value="FLAGELLAR BIOSYNTHESIS PROTEIN FLHF"/>
    <property type="match status" value="1"/>
</dbReference>
<dbReference type="PANTHER" id="PTHR43134">
    <property type="entry name" value="SIGNAL RECOGNITION PARTICLE RECEPTOR SUBUNIT ALPHA"/>
    <property type="match status" value="1"/>
</dbReference>
<dbReference type="Pfam" id="PF00448">
    <property type="entry name" value="SRP54"/>
    <property type="match status" value="1"/>
</dbReference>
<dbReference type="SMART" id="SM00382">
    <property type="entry name" value="AAA"/>
    <property type="match status" value="1"/>
</dbReference>
<dbReference type="SMART" id="SM00962">
    <property type="entry name" value="SRP54"/>
    <property type="match status" value="1"/>
</dbReference>
<dbReference type="SUPFAM" id="SSF52540">
    <property type="entry name" value="P-loop containing nucleoside triphosphate hydrolases"/>
    <property type="match status" value="1"/>
</dbReference>
<evidence type="ECO:0000250" key="1"/>
<evidence type="ECO:0000305" key="2"/>
<feature type="chain" id="PRO_0000101223" description="Flagellar biosynthesis protein FlhF">
    <location>
        <begin position="1"/>
        <end position="459"/>
    </location>
</feature>
<feature type="binding site" evidence="1">
    <location>
        <begin position="263"/>
        <end position="270"/>
    </location>
    <ligand>
        <name>GTP</name>
        <dbReference type="ChEBI" id="CHEBI:37565"/>
    </ligand>
</feature>
<feature type="binding site" evidence="1">
    <location>
        <begin position="342"/>
        <end position="346"/>
    </location>
    <ligand>
        <name>GTP</name>
        <dbReference type="ChEBI" id="CHEBI:37565"/>
    </ligand>
</feature>
<feature type="binding site" evidence="1">
    <location>
        <begin position="400"/>
        <end position="403"/>
    </location>
    <ligand>
        <name>GTP</name>
        <dbReference type="ChEBI" id="CHEBI:37565"/>
    </ligand>
</feature>
<comment type="function">
    <text evidence="1">Necessary for flagellar biosynthesis. May be involved in translocation of the flagellum (By similarity).</text>
</comment>
<comment type="subcellular location">
    <subcellularLocation>
        <location evidence="1">Cell membrane</location>
        <topology evidence="1">Peripheral membrane protein</topology>
        <orientation evidence="1">Cytoplasmic side</orientation>
    </subcellularLocation>
</comment>
<comment type="similarity">
    <text evidence="2">Belongs to the GTP-binding SRP family.</text>
</comment>
<gene>
    <name type="primary">flhF</name>
    <name type="ordered locus">HP_1035</name>
</gene>
<reference key="1">
    <citation type="journal article" date="1997" name="Nature">
        <title>The complete genome sequence of the gastric pathogen Helicobacter pylori.</title>
        <authorList>
            <person name="Tomb J.-F."/>
            <person name="White O."/>
            <person name="Kerlavage A.R."/>
            <person name="Clayton R.A."/>
            <person name="Sutton G.G."/>
            <person name="Fleischmann R.D."/>
            <person name="Ketchum K.A."/>
            <person name="Klenk H.-P."/>
            <person name="Gill S.R."/>
            <person name="Dougherty B.A."/>
            <person name="Nelson K.E."/>
            <person name="Quackenbush J."/>
            <person name="Zhou L."/>
            <person name="Kirkness E.F."/>
            <person name="Peterson S.N."/>
            <person name="Loftus B.J."/>
            <person name="Richardson D.L."/>
            <person name="Dodson R.J."/>
            <person name="Khalak H.G."/>
            <person name="Glodek A."/>
            <person name="McKenney K."/>
            <person name="FitzGerald L.M."/>
            <person name="Lee N."/>
            <person name="Adams M.D."/>
            <person name="Hickey E.K."/>
            <person name="Berg D.E."/>
            <person name="Gocayne J.D."/>
            <person name="Utterback T.R."/>
            <person name="Peterson J.D."/>
            <person name="Kelley J.M."/>
            <person name="Cotton M.D."/>
            <person name="Weidman J.F."/>
            <person name="Fujii C."/>
            <person name="Bowman C."/>
            <person name="Watthey L."/>
            <person name="Wallin E."/>
            <person name="Hayes W.S."/>
            <person name="Borodovsky M."/>
            <person name="Karp P.D."/>
            <person name="Smith H.O."/>
            <person name="Fraser C.M."/>
            <person name="Venter J.C."/>
        </authorList>
    </citation>
    <scope>NUCLEOTIDE SEQUENCE [LARGE SCALE GENOMIC DNA]</scope>
    <source>
        <strain>ATCC 700392 / 26695</strain>
    </source>
</reference>
<accession>O25679</accession>
<keyword id="KW-1005">Bacterial flagellum biogenesis</keyword>
<keyword id="KW-1006">Bacterial flagellum protein export</keyword>
<keyword id="KW-1003">Cell membrane</keyword>
<keyword id="KW-0342">GTP-binding</keyword>
<keyword id="KW-0472">Membrane</keyword>
<keyword id="KW-0547">Nucleotide-binding</keyword>
<keyword id="KW-0653">Protein transport</keyword>
<keyword id="KW-1185">Reference proteome</keyword>
<keyword id="KW-0813">Transport</keyword>
<name>FLHF_HELPY</name>
<organism>
    <name type="scientific">Helicobacter pylori (strain ATCC 700392 / 26695)</name>
    <name type="common">Campylobacter pylori</name>
    <dbReference type="NCBI Taxonomy" id="85962"/>
    <lineage>
        <taxon>Bacteria</taxon>
        <taxon>Pseudomonadati</taxon>
        <taxon>Campylobacterota</taxon>
        <taxon>Epsilonproteobacteria</taxon>
        <taxon>Campylobacterales</taxon>
        <taxon>Helicobacteraceae</taxon>
        <taxon>Helicobacter</taxon>
    </lineage>
</organism>
<sequence length="459" mass="52302">MVKFYTYSGETAAEALKIAQSHHGVDTLVFKTQEIRKKTLTSSGLYEIVVAVEEESENKPSKAPLIPESLYDEELNEEDVVMQLSSTVEEMRKLAGVSSSQRHYSFSKNKTLLEKDAPLEDAPLEANKQDALLQALKDEANHKKEREKREVKQEEEIKDINLQLSKIRDSLKLIQNMFWDEKNPNSINIPQEFAEIYKLAKQSGMKPSHLDEIMQLSLELMPLRMRENSVTIKRYFREVLRKMILCCPEDLNLRQKRILMLVGPTGVGKTTTLAKLAARYSRMLAKKYKVGIITLDNYRIGALEQLSWYANKMKMSIEAVIDAKDFAKEIEALEYCDFILVDTTGHSQYDKEKIAGLKEFIDGGYNIDVSLVLSVTTKYEDMKDIYDSFGVLGIDTLIFTKLDESRGLGNLFSLVHESQKPISYLSVGQEVPMDLKVATNEYLVDCMLDGFSNPNKEQA</sequence>
<proteinExistence type="inferred from homology"/>